<dbReference type="Proteomes" id="UP000694395">
    <property type="component" value="Unplaced"/>
</dbReference>
<dbReference type="GO" id="GO:0005576">
    <property type="term" value="C:extracellular region"/>
    <property type="evidence" value="ECO:0007669"/>
    <property type="project" value="UniProtKB-SubCell"/>
</dbReference>
<dbReference type="GO" id="GO:0042742">
    <property type="term" value="P:defense response to bacterium"/>
    <property type="evidence" value="ECO:0007669"/>
    <property type="project" value="UniProtKB-KW"/>
</dbReference>
<sequence length="13" mass="1400">AGFVLKGYTKTSQ</sequence>
<comment type="function">
    <text evidence="1">Antibacterial activity against Gram-negative bacteria.</text>
</comment>
<comment type="subcellular location">
    <subcellularLocation>
        <location>Secreted</location>
    </subcellularLocation>
</comment>
<comment type="tissue specificity">
    <text>Plasma serum.</text>
</comment>
<feature type="peptide" id="PRO_0000045109" description="Salmocidin-2B">
    <location>
        <begin position="1"/>
        <end position="13" status="greater than"/>
    </location>
</feature>
<feature type="non-terminal residue">
    <location>
        <position position="13"/>
    </location>
</feature>
<keyword id="KW-0044">Antibiotic</keyword>
<keyword id="KW-0929">Antimicrobial</keyword>
<keyword id="KW-0903">Direct protein sequencing</keyword>
<keyword id="KW-0964">Secreted</keyword>
<organism>
    <name type="scientific">Oncorhynchus mykiss</name>
    <name type="common">Rainbow trout</name>
    <name type="synonym">Salmo gairdneri</name>
    <dbReference type="NCBI Taxonomy" id="8022"/>
    <lineage>
        <taxon>Eukaryota</taxon>
        <taxon>Metazoa</taxon>
        <taxon>Chordata</taxon>
        <taxon>Craniata</taxon>
        <taxon>Vertebrata</taxon>
        <taxon>Euteleostomi</taxon>
        <taxon>Actinopterygii</taxon>
        <taxon>Neopterygii</taxon>
        <taxon>Teleostei</taxon>
        <taxon>Protacanthopterygii</taxon>
        <taxon>Salmoniformes</taxon>
        <taxon>Salmonidae</taxon>
        <taxon>Salmoninae</taxon>
        <taxon>Oncorhynchus</taxon>
    </lineage>
</organism>
<accession>P82239</accession>
<reference key="1">
    <citation type="submission" date="1999-12" db="UniProtKB">
        <title>Purification and partial characterization of antibacterial peptides from rainbow trout, Oncorhynchus mykiss.</title>
        <authorList>
            <person name="Henry M.A."/>
            <person name="Secombes C.J."/>
        </authorList>
    </citation>
    <scope>PROTEIN SEQUENCE</scope>
    <scope>FUNCTION</scope>
    <source>
        <tissue>Serum</tissue>
    </source>
</reference>
<protein>
    <recommendedName>
        <fullName>Salmocidin-2B</fullName>
    </recommendedName>
</protein>
<evidence type="ECO:0000269" key="1">
    <source ref="1"/>
</evidence>
<name>SAL2B_ONCMY</name>
<proteinExistence type="evidence at protein level"/>